<accession>B4TGN5</accession>
<gene>
    <name evidence="1" type="primary">fucU</name>
    <name type="ordered locus">SeHA_C3188</name>
</gene>
<sequence length="140" mass="15254">MLKTISPLISPTLLKVLAEMGHGDEIIFSDAHFPAHSLGPQVIRADGLSVSDLLRAIIPLFELDSYAPPLVMMAAVEGDTLDPSVEARYRDALSLEAPCPDIVRIDRYAFYERAQKAFAIVITGECAKYGNILLKKGVTP</sequence>
<feature type="chain" id="PRO_1000187195" description="L-fucose mutarotase">
    <location>
        <begin position="1"/>
        <end position="140"/>
    </location>
</feature>
<feature type="active site" description="Proton donor" evidence="1">
    <location>
        <position position="22"/>
    </location>
</feature>
<feature type="binding site" evidence="1">
    <location>
        <position position="30"/>
    </location>
    <ligand>
        <name>substrate</name>
    </ligand>
</feature>
<feature type="binding site" evidence="1">
    <location>
        <position position="107"/>
    </location>
    <ligand>
        <name>substrate</name>
    </ligand>
</feature>
<feature type="binding site" evidence="1">
    <location>
        <begin position="129"/>
        <end position="131"/>
    </location>
    <ligand>
        <name>substrate</name>
    </ligand>
</feature>
<name>FUCM_SALHS</name>
<reference key="1">
    <citation type="journal article" date="2011" name="J. Bacteriol.">
        <title>Comparative genomics of 28 Salmonella enterica isolates: evidence for CRISPR-mediated adaptive sublineage evolution.</title>
        <authorList>
            <person name="Fricke W.F."/>
            <person name="Mammel M.K."/>
            <person name="McDermott P.F."/>
            <person name="Tartera C."/>
            <person name="White D.G."/>
            <person name="Leclerc J.E."/>
            <person name="Ravel J."/>
            <person name="Cebula T.A."/>
        </authorList>
    </citation>
    <scope>NUCLEOTIDE SEQUENCE [LARGE SCALE GENOMIC DNA]</scope>
    <source>
        <strain>SL476</strain>
    </source>
</reference>
<dbReference type="EC" id="5.1.3.29" evidence="1"/>
<dbReference type="EMBL" id="CP001120">
    <property type="protein sequence ID" value="ACF67134.1"/>
    <property type="molecule type" value="Genomic_DNA"/>
</dbReference>
<dbReference type="RefSeq" id="WP_000920848.1">
    <property type="nucleotide sequence ID" value="NC_011083.1"/>
</dbReference>
<dbReference type="SMR" id="B4TGN5"/>
<dbReference type="KEGG" id="seh:SeHA_C3188"/>
<dbReference type="HOGENOM" id="CLU_120075_1_0_6"/>
<dbReference type="UniPathway" id="UPA00956"/>
<dbReference type="Proteomes" id="UP000001866">
    <property type="component" value="Chromosome"/>
</dbReference>
<dbReference type="GO" id="GO:0005737">
    <property type="term" value="C:cytoplasm"/>
    <property type="evidence" value="ECO:0007669"/>
    <property type="project" value="UniProtKB-SubCell"/>
</dbReference>
<dbReference type="GO" id="GO:0042806">
    <property type="term" value="F:fucose binding"/>
    <property type="evidence" value="ECO:0007669"/>
    <property type="project" value="InterPro"/>
</dbReference>
<dbReference type="GO" id="GO:0036373">
    <property type="term" value="F:L-fucose mutarotase activity"/>
    <property type="evidence" value="ECO:0007669"/>
    <property type="project" value="UniProtKB-EC"/>
</dbReference>
<dbReference type="GO" id="GO:0036065">
    <property type="term" value="P:fucosylation"/>
    <property type="evidence" value="ECO:0007669"/>
    <property type="project" value="TreeGrafter"/>
</dbReference>
<dbReference type="GO" id="GO:0042354">
    <property type="term" value="P:L-fucose metabolic process"/>
    <property type="evidence" value="ECO:0007669"/>
    <property type="project" value="UniProtKB-UniRule"/>
</dbReference>
<dbReference type="FunFam" id="3.40.1650.10:FF:000001">
    <property type="entry name" value="L-fucose mutarotase"/>
    <property type="match status" value="1"/>
</dbReference>
<dbReference type="Gene3D" id="3.40.1650.10">
    <property type="entry name" value="RbsD-like domain"/>
    <property type="match status" value="1"/>
</dbReference>
<dbReference type="HAMAP" id="MF_01662">
    <property type="entry name" value="L_fucose_rotase"/>
    <property type="match status" value="1"/>
</dbReference>
<dbReference type="InterPro" id="IPR023751">
    <property type="entry name" value="L-fucose_mutarotase"/>
</dbReference>
<dbReference type="InterPro" id="IPR023750">
    <property type="entry name" value="RbsD-like_sf"/>
</dbReference>
<dbReference type="InterPro" id="IPR050443">
    <property type="entry name" value="RbsD/FucU_mutarotase"/>
</dbReference>
<dbReference type="InterPro" id="IPR007721">
    <property type="entry name" value="RbsD_FucU"/>
</dbReference>
<dbReference type="NCBIfam" id="NF011949">
    <property type="entry name" value="PRK15420.1"/>
    <property type="match status" value="1"/>
</dbReference>
<dbReference type="PANTHER" id="PTHR31690">
    <property type="entry name" value="FUCOSE MUTAROTASE"/>
    <property type="match status" value="1"/>
</dbReference>
<dbReference type="PANTHER" id="PTHR31690:SF4">
    <property type="entry name" value="FUCOSE MUTAROTASE"/>
    <property type="match status" value="1"/>
</dbReference>
<dbReference type="Pfam" id="PF05025">
    <property type="entry name" value="RbsD_FucU"/>
    <property type="match status" value="1"/>
</dbReference>
<dbReference type="SUPFAM" id="SSF102546">
    <property type="entry name" value="RbsD-like"/>
    <property type="match status" value="1"/>
</dbReference>
<protein>
    <recommendedName>
        <fullName evidence="1">L-fucose mutarotase</fullName>
        <ecNumber evidence="1">5.1.3.29</ecNumber>
    </recommendedName>
    <alternativeName>
        <fullName evidence="1">Fucose 1-epimerase</fullName>
    </alternativeName>
    <alternativeName>
        <fullName evidence="1">Type-2 mutarotase</fullName>
    </alternativeName>
</protein>
<proteinExistence type="inferred from homology"/>
<evidence type="ECO:0000255" key="1">
    <source>
        <dbReference type="HAMAP-Rule" id="MF_01662"/>
    </source>
</evidence>
<organism>
    <name type="scientific">Salmonella heidelberg (strain SL476)</name>
    <dbReference type="NCBI Taxonomy" id="454169"/>
    <lineage>
        <taxon>Bacteria</taxon>
        <taxon>Pseudomonadati</taxon>
        <taxon>Pseudomonadota</taxon>
        <taxon>Gammaproteobacteria</taxon>
        <taxon>Enterobacterales</taxon>
        <taxon>Enterobacteriaceae</taxon>
        <taxon>Salmonella</taxon>
    </lineage>
</organism>
<keyword id="KW-0119">Carbohydrate metabolism</keyword>
<keyword id="KW-0963">Cytoplasm</keyword>
<keyword id="KW-0294">Fucose metabolism</keyword>
<keyword id="KW-0413">Isomerase</keyword>
<comment type="function">
    <text evidence="1">Involved in the anomeric conversion of L-fucose.</text>
</comment>
<comment type="catalytic activity">
    <reaction evidence="1">
        <text>alpha-L-fucose = beta-L-fucose</text>
        <dbReference type="Rhea" id="RHEA:25580"/>
        <dbReference type="ChEBI" id="CHEBI:42548"/>
        <dbReference type="ChEBI" id="CHEBI:42589"/>
        <dbReference type="EC" id="5.1.3.29"/>
    </reaction>
</comment>
<comment type="pathway">
    <text evidence="1">Carbohydrate metabolism; L-fucose metabolism.</text>
</comment>
<comment type="subunit">
    <text evidence="1">Homodecamer.</text>
</comment>
<comment type="subcellular location">
    <subcellularLocation>
        <location evidence="1">Cytoplasm</location>
    </subcellularLocation>
</comment>
<comment type="similarity">
    <text evidence="1">Belongs to the RbsD / FucU family. FucU mutarotase subfamily.</text>
</comment>